<accession>Q9SN28</accession>
<proteinExistence type="evidence at transcript level"/>
<feature type="chain" id="PRO_0000055799" description="RING-H2 finger protein ATL7">
    <location>
        <begin position="1"/>
        <end position="236"/>
    </location>
</feature>
<feature type="transmembrane region" description="Helical" evidence="2">
    <location>
        <begin position="31"/>
        <end position="51"/>
    </location>
</feature>
<feature type="zinc finger region" description="RING-type; atypical" evidence="3">
    <location>
        <begin position="111"/>
        <end position="153"/>
    </location>
</feature>
<feature type="region of interest" description="Disordered" evidence="4">
    <location>
        <begin position="176"/>
        <end position="236"/>
    </location>
</feature>
<feature type="compositionally biased region" description="Polar residues" evidence="4">
    <location>
        <begin position="176"/>
        <end position="196"/>
    </location>
</feature>
<feature type="compositionally biased region" description="Basic and acidic residues" evidence="4">
    <location>
        <begin position="197"/>
        <end position="221"/>
    </location>
</feature>
<sequence>MSYSDPNQNPIPETYAPSNSTESEKLKLYQAFIFSVPICFTFIVLFVLYVIYLRRNSTTNVDWSSLGMRGGTFVPTNNNLSTAELGLSKDIREMLPVVIYKESFIVKDSQCSVCLGDYQAEEKLQQMPSCGHTFHMECIDLWLTSHTTCPLCRLSLIPKPSLDLSHQSTEIVSSIENSNGGEASTQPDSQSATEAISHTDDVEEGNRDSQEVSKETEENDRNSVGTSDGCCTCRLG</sequence>
<reference key="1">
    <citation type="journal article" date="1999" name="Nature">
        <title>Sequence and analysis of chromosome 4 of the plant Arabidopsis thaliana.</title>
        <authorList>
            <person name="Mayer K.F.X."/>
            <person name="Schueller C."/>
            <person name="Wambutt R."/>
            <person name="Murphy G."/>
            <person name="Volckaert G."/>
            <person name="Pohl T."/>
            <person name="Duesterhoeft A."/>
            <person name="Stiekema W."/>
            <person name="Entian K.-D."/>
            <person name="Terryn N."/>
            <person name="Harris B."/>
            <person name="Ansorge W."/>
            <person name="Brandt P."/>
            <person name="Grivell L.A."/>
            <person name="Rieger M."/>
            <person name="Weichselgartner M."/>
            <person name="de Simone V."/>
            <person name="Obermaier B."/>
            <person name="Mache R."/>
            <person name="Mueller M."/>
            <person name="Kreis M."/>
            <person name="Delseny M."/>
            <person name="Puigdomenech P."/>
            <person name="Watson M."/>
            <person name="Schmidtheini T."/>
            <person name="Reichert B."/>
            <person name="Portetelle D."/>
            <person name="Perez-Alonso M."/>
            <person name="Boutry M."/>
            <person name="Bancroft I."/>
            <person name="Vos P."/>
            <person name="Hoheisel J."/>
            <person name="Zimmermann W."/>
            <person name="Wedler H."/>
            <person name="Ridley P."/>
            <person name="Langham S.-A."/>
            <person name="McCullagh B."/>
            <person name="Bilham L."/>
            <person name="Robben J."/>
            <person name="van der Schueren J."/>
            <person name="Grymonprez B."/>
            <person name="Chuang Y.-J."/>
            <person name="Vandenbussche F."/>
            <person name="Braeken M."/>
            <person name="Weltjens I."/>
            <person name="Voet M."/>
            <person name="Bastiaens I."/>
            <person name="Aert R."/>
            <person name="Defoor E."/>
            <person name="Weitzenegger T."/>
            <person name="Bothe G."/>
            <person name="Ramsperger U."/>
            <person name="Hilbert H."/>
            <person name="Braun M."/>
            <person name="Holzer E."/>
            <person name="Brandt A."/>
            <person name="Peters S."/>
            <person name="van Staveren M."/>
            <person name="Dirkse W."/>
            <person name="Mooijman P."/>
            <person name="Klein Lankhorst R."/>
            <person name="Rose M."/>
            <person name="Hauf J."/>
            <person name="Koetter P."/>
            <person name="Berneiser S."/>
            <person name="Hempel S."/>
            <person name="Feldpausch M."/>
            <person name="Lamberth S."/>
            <person name="Van den Daele H."/>
            <person name="De Keyser A."/>
            <person name="Buysshaert C."/>
            <person name="Gielen J."/>
            <person name="Villarroel R."/>
            <person name="De Clercq R."/>
            <person name="van Montagu M."/>
            <person name="Rogers J."/>
            <person name="Cronin A."/>
            <person name="Quail M.A."/>
            <person name="Bray-Allen S."/>
            <person name="Clark L."/>
            <person name="Doggett J."/>
            <person name="Hall S."/>
            <person name="Kay M."/>
            <person name="Lennard N."/>
            <person name="McLay K."/>
            <person name="Mayes R."/>
            <person name="Pettett A."/>
            <person name="Rajandream M.A."/>
            <person name="Lyne M."/>
            <person name="Benes V."/>
            <person name="Rechmann S."/>
            <person name="Borkova D."/>
            <person name="Bloecker H."/>
            <person name="Scharfe M."/>
            <person name="Grimm M."/>
            <person name="Loehnert T.-H."/>
            <person name="Dose S."/>
            <person name="de Haan M."/>
            <person name="Maarse A.C."/>
            <person name="Schaefer M."/>
            <person name="Mueller-Auer S."/>
            <person name="Gabel C."/>
            <person name="Fuchs M."/>
            <person name="Fartmann B."/>
            <person name="Granderath K."/>
            <person name="Dauner D."/>
            <person name="Herzl A."/>
            <person name="Neumann S."/>
            <person name="Argiriou A."/>
            <person name="Vitale D."/>
            <person name="Liguori R."/>
            <person name="Piravandi E."/>
            <person name="Massenet O."/>
            <person name="Quigley F."/>
            <person name="Clabauld G."/>
            <person name="Muendlein A."/>
            <person name="Felber R."/>
            <person name="Schnabl S."/>
            <person name="Hiller R."/>
            <person name="Schmidt W."/>
            <person name="Lecharny A."/>
            <person name="Aubourg S."/>
            <person name="Chefdor F."/>
            <person name="Cooke R."/>
            <person name="Berger C."/>
            <person name="Monfort A."/>
            <person name="Casacuberta E."/>
            <person name="Gibbons T."/>
            <person name="Weber N."/>
            <person name="Vandenbol M."/>
            <person name="Bargues M."/>
            <person name="Terol J."/>
            <person name="Torres A."/>
            <person name="Perez-Perez A."/>
            <person name="Purnelle B."/>
            <person name="Bent E."/>
            <person name="Johnson S."/>
            <person name="Tacon D."/>
            <person name="Jesse T."/>
            <person name="Heijnen L."/>
            <person name="Schwarz S."/>
            <person name="Scholler P."/>
            <person name="Heber S."/>
            <person name="Francs P."/>
            <person name="Bielke C."/>
            <person name="Frishman D."/>
            <person name="Haase D."/>
            <person name="Lemcke K."/>
            <person name="Mewes H.-W."/>
            <person name="Stocker S."/>
            <person name="Zaccaria P."/>
            <person name="Bevan M."/>
            <person name="Wilson R.K."/>
            <person name="de la Bastide M."/>
            <person name="Habermann K."/>
            <person name="Parnell L."/>
            <person name="Dedhia N."/>
            <person name="Gnoj L."/>
            <person name="Schutz K."/>
            <person name="Huang E."/>
            <person name="Spiegel L."/>
            <person name="Sekhon M."/>
            <person name="Murray J."/>
            <person name="Sheet P."/>
            <person name="Cordes M."/>
            <person name="Abu-Threideh J."/>
            <person name="Stoneking T."/>
            <person name="Kalicki J."/>
            <person name="Graves T."/>
            <person name="Harmon G."/>
            <person name="Edwards J."/>
            <person name="Latreille P."/>
            <person name="Courtney L."/>
            <person name="Cloud J."/>
            <person name="Abbott A."/>
            <person name="Scott K."/>
            <person name="Johnson D."/>
            <person name="Minx P."/>
            <person name="Bentley D."/>
            <person name="Fulton B."/>
            <person name="Miller N."/>
            <person name="Greco T."/>
            <person name="Kemp K."/>
            <person name="Kramer J."/>
            <person name="Fulton L."/>
            <person name="Mardis E."/>
            <person name="Dante M."/>
            <person name="Pepin K."/>
            <person name="Hillier L.W."/>
            <person name="Nelson J."/>
            <person name="Spieth J."/>
            <person name="Ryan E."/>
            <person name="Andrews S."/>
            <person name="Geisel C."/>
            <person name="Layman D."/>
            <person name="Du H."/>
            <person name="Ali J."/>
            <person name="Berghoff A."/>
            <person name="Jones K."/>
            <person name="Drone K."/>
            <person name="Cotton M."/>
            <person name="Joshu C."/>
            <person name="Antonoiu B."/>
            <person name="Zidanic M."/>
            <person name="Strong C."/>
            <person name="Sun H."/>
            <person name="Lamar B."/>
            <person name="Yordan C."/>
            <person name="Ma P."/>
            <person name="Zhong J."/>
            <person name="Preston R."/>
            <person name="Vil D."/>
            <person name="Shekher M."/>
            <person name="Matero A."/>
            <person name="Shah R."/>
            <person name="Swaby I.K."/>
            <person name="O'Shaughnessy A."/>
            <person name="Rodriguez M."/>
            <person name="Hoffman J."/>
            <person name="Till S."/>
            <person name="Granat S."/>
            <person name="Shohdy N."/>
            <person name="Hasegawa A."/>
            <person name="Hameed A."/>
            <person name="Lodhi M."/>
            <person name="Johnson A."/>
            <person name="Chen E."/>
            <person name="Marra M.A."/>
            <person name="Martienssen R."/>
            <person name="McCombie W.R."/>
        </authorList>
    </citation>
    <scope>NUCLEOTIDE SEQUENCE [LARGE SCALE GENOMIC DNA]</scope>
    <source>
        <strain>cv. Columbia</strain>
    </source>
</reference>
<reference key="2">
    <citation type="journal article" date="2017" name="Plant J.">
        <title>Araport11: a complete reannotation of the Arabidopsis thaliana reference genome.</title>
        <authorList>
            <person name="Cheng C.Y."/>
            <person name="Krishnakumar V."/>
            <person name="Chan A.P."/>
            <person name="Thibaud-Nissen F."/>
            <person name="Schobel S."/>
            <person name="Town C.D."/>
        </authorList>
    </citation>
    <scope>GENOME REANNOTATION</scope>
    <source>
        <strain>cv. Columbia</strain>
    </source>
</reference>
<reference key="3">
    <citation type="journal article" date="2003" name="Science">
        <title>Empirical analysis of transcriptional activity in the Arabidopsis genome.</title>
        <authorList>
            <person name="Yamada K."/>
            <person name="Lim J."/>
            <person name="Dale J.M."/>
            <person name="Chen H."/>
            <person name="Shinn P."/>
            <person name="Palm C.J."/>
            <person name="Southwick A.M."/>
            <person name="Wu H.C."/>
            <person name="Kim C.J."/>
            <person name="Nguyen M."/>
            <person name="Pham P.K."/>
            <person name="Cheuk R.F."/>
            <person name="Karlin-Newmann G."/>
            <person name="Liu S.X."/>
            <person name="Lam B."/>
            <person name="Sakano H."/>
            <person name="Wu T."/>
            <person name="Yu G."/>
            <person name="Miranda M."/>
            <person name="Quach H.L."/>
            <person name="Tripp M."/>
            <person name="Chang C.H."/>
            <person name="Lee J.M."/>
            <person name="Toriumi M.J."/>
            <person name="Chan M.M."/>
            <person name="Tang C.C."/>
            <person name="Onodera C.S."/>
            <person name="Deng J.M."/>
            <person name="Akiyama K."/>
            <person name="Ansari Y."/>
            <person name="Arakawa T."/>
            <person name="Banh J."/>
            <person name="Banno F."/>
            <person name="Bowser L."/>
            <person name="Brooks S.Y."/>
            <person name="Carninci P."/>
            <person name="Chao Q."/>
            <person name="Choy N."/>
            <person name="Enju A."/>
            <person name="Goldsmith A.D."/>
            <person name="Gurjal M."/>
            <person name="Hansen N.F."/>
            <person name="Hayashizaki Y."/>
            <person name="Johnson-Hopson C."/>
            <person name="Hsuan V.W."/>
            <person name="Iida K."/>
            <person name="Karnes M."/>
            <person name="Khan S."/>
            <person name="Koesema E."/>
            <person name="Ishida J."/>
            <person name="Jiang P.X."/>
            <person name="Jones T."/>
            <person name="Kawai J."/>
            <person name="Kamiya A."/>
            <person name="Meyers C."/>
            <person name="Nakajima M."/>
            <person name="Narusaka M."/>
            <person name="Seki M."/>
            <person name="Sakurai T."/>
            <person name="Satou M."/>
            <person name="Tamse R."/>
            <person name="Vaysberg M."/>
            <person name="Wallender E.K."/>
            <person name="Wong C."/>
            <person name="Yamamura Y."/>
            <person name="Yuan S."/>
            <person name="Shinozaki K."/>
            <person name="Davis R.W."/>
            <person name="Theologis A."/>
            <person name="Ecker J.R."/>
        </authorList>
    </citation>
    <scope>NUCLEOTIDE SEQUENCE [LARGE SCALE MRNA]</scope>
    <source>
        <strain>cv. Columbia</strain>
    </source>
</reference>
<reference key="4">
    <citation type="journal article" date="2002" name="Genome Biol.">
        <title>Evaluation and classification of RING-finger domains encoded by the Arabidopsis genome.</title>
        <authorList>
            <person name="Kosarev P."/>
            <person name="Mayer K.F.X."/>
            <person name="Hardtke C.S."/>
        </authorList>
    </citation>
    <scope>GENE FAMILY ORGANIZATION</scope>
</reference>
<reference key="5">
    <citation type="journal article" date="2006" name="J. Mol. Evol.">
        <title>The ATL gene family from Arabidopsis thaliana and Oryza sativa comprises a large number of putative ubiquitin ligases of the RING-H2 type.</title>
        <authorList>
            <person name="Serrano M."/>
            <person name="Parra S."/>
            <person name="Alcaraz L.D."/>
            <person name="Guzman P."/>
        </authorList>
    </citation>
    <scope>NOMENCLATURE</scope>
    <scope>GENE FAMILY ORGANIZATION</scope>
</reference>
<protein>
    <recommendedName>
        <fullName>RING-H2 finger protein ATL7</fullName>
        <ecNumber evidence="5">2.3.2.27</ecNumber>
    </recommendedName>
    <alternativeName>
        <fullName evidence="5">RING-type E3 ubiquitin transferase ATL7</fullName>
    </alternativeName>
</protein>
<name>ATL7_ARATH</name>
<dbReference type="EC" id="2.3.2.27" evidence="5"/>
<dbReference type="EMBL" id="AF096373">
    <property type="status" value="NOT_ANNOTATED_CDS"/>
    <property type="molecule type" value="Genomic_DNA"/>
</dbReference>
<dbReference type="EMBL" id="AL049487">
    <property type="protein sequence ID" value="CAB39767.1"/>
    <property type="molecule type" value="Genomic_DNA"/>
</dbReference>
<dbReference type="EMBL" id="AL161516">
    <property type="protein sequence ID" value="CAB78138.1"/>
    <property type="molecule type" value="Genomic_DNA"/>
</dbReference>
<dbReference type="EMBL" id="CP002687">
    <property type="protein sequence ID" value="AEE82848.1"/>
    <property type="molecule type" value="Genomic_DNA"/>
</dbReference>
<dbReference type="EMBL" id="AY122914">
    <property type="protein sequence ID" value="AAM67447.1"/>
    <property type="molecule type" value="mRNA"/>
</dbReference>
<dbReference type="PIR" id="T04065">
    <property type="entry name" value="T04065"/>
</dbReference>
<dbReference type="RefSeq" id="NP_192753.1">
    <property type="nucleotide sequence ID" value="NM_117083.3"/>
</dbReference>
<dbReference type="SMR" id="Q9SN28"/>
<dbReference type="STRING" id="3702.Q9SN28"/>
<dbReference type="PaxDb" id="3702-AT4G10150.1"/>
<dbReference type="ProteomicsDB" id="246579"/>
<dbReference type="EnsemblPlants" id="AT4G10150.1">
    <property type="protein sequence ID" value="AT4G10150.1"/>
    <property type="gene ID" value="AT4G10150"/>
</dbReference>
<dbReference type="GeneID" id="826606"/>
<dbReference type="Gramene" id="AT4G10150.1">
    <property type="protein sequence ID" value="AT4G10150.1"/>
    <property type="gene ID" value="AT4G10150"/>
</dbReference>
<dbReference type="KEGG" id="ath:AT4G10150"/>
<dbReference type="Araport" id="AT4G10150"/>
<dbReference type="TAIR" id="AT4G10150">
    <property type="gene designation" value="ATL07"/>
</dbReference>
<dbReference type="eggNOG" id="KOG0800">
    <property type="taxonomic scope" value="Eukaryota"/>
</dbReference>
<dbReference type="HOGENOM" id="CLU_078082_0_0_1"/>
<dbReference type="InParanoid" id="Q9SN28"/>
<dbReference type="OMA" id="MPACGHT"/>
<dbReference type="OrthoDB" id="8062037at2759"/>
<dbReference type="PhylomeDB" id="Q9SN28"/>
<dbReference type="UniPathway" id="UPA00143"/>
<dbReference type="PRO" id="PR:Q9SN28"/>
<dbReference type="Proteomes" id="UP000006548">
    <property type="component" value="Chromosome 4"/>
</dbReference>
<dbReference type="ExpressionAtlas" id="Q9SN28">
    <property type="expression patterns" value="baseline and differential"/>
</dbReference>
<dbReference type="GO" id="GO:0016020">
    <property type="term" value="C:membrane"/>
    <property type="evidence" value="ECO:0007669"/>
    <property type="project" value="UniProtKB-SubCell"/>
</dbReference>
<dbReference type="GO" id="GO:0016740">
    <property type="term" value="F:transferase activity"/>
    <property type="evidence" value="ECO:0007669"/>
    <property type="project" value="UniProtKB-KW"/>
</dbReference>
<dbReference type="GO" id="GO:0008270">
    <property type="term" value="F:zinc ion binding"/>
    <property type="evidence" value="ECO:0007669"/>
    <property type="project" value="UniProtKB-KW"/>
</dbReference>
<dbReference type="GO" id="GO:0016567">
    <property type="term" value="P:protein ubiquitination"/>
    <property type="evidence" value="ECO:0007669"/>
    <property type="project" value="UniProtKB-UniPathway"/>
</dbReference>
<dbReference type="CDD" id="cd16461">
    <property type="entry name" value="RING-H2_EL5-like"/>
    <property type="match status" value="1"/>
</dbReference>
<dbReference type="FunFam" id="3.30.40.10:FF:000503">
    <property type="entry name" value="RING-H2 finger protein ATL7"/>
    <property type="match status" value="1"/>
</dbReference>
<dbReference type="Gene3D" id="3.30.40.10">
    <property type="entry name" value="Zinc/RING finger domain, C3HC4 (zinc finger)"/>
    <property type="match status" value="1"/>
</dbReference>
<dbReference type="InterPro" id="IPR053070">
    <property type="entry name" value="RING-type_E3_ubiquitin-ligase"/>
</dbReference>
<dbReference type="InterPro" id="IPR001841">
    <property type="entry name" value="Znf_RING"/>
</dbReference>
<dbReference type="InterPro" id="IPR013083">
    <property type="entry name" value="Znf_RING/FYVE/PHD"/>
</dbReference>
<dbReference type="PANTHER" id="PTHR47035">
    <property type="entry name" value="OS11G0150450 PROTEIN"/>
    <property type="match status" value="1"/>
</dbReference>
<dbReference type="PANTHER" id="PTHR47035:SF3">
    <property type="entry name" value="OS11G0150450 PROTEIN"/>
    <property type="match status" value="1"/>
</dbReference>
<dbReference type="Pfam" id="PF13639">
    <property type="entry name" value="zf-RING_2"/>
    <property type="match status" value="1"/>
</dbReference>
<dbReference type="SMART" id="SM00184">
    <property type="entry name" value="RING"/>
    <property type="match status" value="1"/>
</dbReference>
<dbReference type="SUPFAM" id="SSF57850">
    <property type="entry name" value="RING/U-box"/>
    <property type="match status" value="1"/>
</dbReference>
<dbReference type="PROSITE" id="PS50089">
    <property type="entry name" value="ZF_RING_2"/>
    <property type="match status" value="1"/>
</dbReference>
<evidence type="ECO:0000250" key="1"/>
<evidence type="ECO:0000255" key="2"/>
<evidence type="ECO:0000255" key="3">
    <source>
        <dbReference type="PROSITE-ProRule" id="PRU00175"/>
    </source>
</evidence>
<evidence type="ECO:0000256" key="4">
    <source>
        <dbReference type="SAM" id="MobiDB-lite"/>
    </source>
</evidence>
<evidence type="ECO:0000305" key="5"/>
<gene>
    <name type="primary">ATL7</name>
    <name type="ordered locus">At4g10150</name>
    <name type="ORF">F28M11.70</name>
    <name type="ORF">T9A4.19</name>
</gene>
<keyword id="KW-0472">Membrane</keyword>
<keyword id="KW-0479">Metal-binding</keyword>
<keyword id="KW-1185">Reference proteome</keyword>
<keyword id="KW-0808">Transferase</keyword>
<keyword id="KW-0812">Transmembrane</keyword>
<keyword id="KW-1133">Transmembrane helix</keyword>
<keyword id="KW-0833">Ubl conjugation pathway</keyword>
<keyword id="KW-0862">Zinc</keyword>
<keyword id="KW-0863">Zinc-finger</keyword>
<comment type="catalytic activity">
    <reaction evidence="5">
        <text>S-ubiquitinyl-[E2 ubiquitin-conjugating enzyme]-L-cysteine + [acceptor protein]-L-lysine = [E2 ubiquitin-conjugating enzyme]-L-cysteine + N(6)-ubiquitinyl-[acceptor protein]-L-lysine.</text>
        <dbReference type="EC" id="2.3.2.27"/>
    </reaction>
</comment>
<comment type="pathway">
    <text>Protein modification; protein ubiquitination.</text>
</comment>
<comment type="subcellular location">
    <subcellularLocation>
        <location evidence="5">Membrane</location>
        <topology evidence="5">Single-pass membrane protein</topology>
    </subcellularLocation>
</comment>
<comment type="domain">
    <text evidence="1">The RING-type zinc finger domain mediates binding to an E2 ubiquitin-conjugating enzyme.</text>
</comment>
<comment type="similarity">
    <text evidence="5">Belongs to the RING-type zinc finger family. ATL subfamily.</text>
</comment>
<organism>
    <name type="scientific">Arabidopsis thaliana</name>
    <name type="common">Mouse-ear cress</name>
    <dbReference type="NCBI Taxonomy" id="3702"/>
    <lineage>
        <taxon>Eukaryota</taxon>
        <taxon>Viridiplantae</taxon>
        <taxon>Streptophyta</taxon>
        <taxon>Embryophyta</taxon>
        <taxon>Tracheophyta</taxon>
        <taxon>Spermatophyta</taxon>
        <taxon>Magnoliopsida</taxon>
        <taxon>eudicotyledons</taxon>
        <taxon>Gunneridae</taxon>
        <taxon>Pentapetalae</taxon>
        <taxon>rosids</taxon>
        <taxon>malvids</taxon>
        <taxon>Brassicales</taxon>
        <taxon>Brassicaceae</taxon>
        <taxon>Camelineae</taxon>
        <taxon>Arabidopsis</taxon>
    </lineage>
</organism>